<accession>Q88Y23</accession>
<accession>F9UMG9</accession>
<dbReference type="EC" id="6.3.2.13" evidence="1"/>
<dbReference type="EMBL" id="AL935263">
    <property type="protein sequence ID" value="CCC78408.1"/>
    <property type="molecule type" value="Genomic_DNA"/>
</dbReference>
<dbReference type="RefSeq" id="WP_011101237.1">
    <property type="nucleotide sequence ID" value="NC_004567.2"/>
</dbReference>
<dbReference type="RefSeq" id="YP_004888922.1">
    <property type="nucleotide sequence ID" value="NC_004567.2"/>
</dbReference>
<dbReference type="SMR" id="Q88Y23"/>
<dbReference type="STRING" id="220668.lp_0977"/>
<dbReference type="EnsemblBacteria" id="CCC78408">
    <property type="protein sequence ID" value="CCC78408"/>
    <property type="gene ID" value="lp_0977"/>
</dbReference>
<dbReference type="KEGG" id="lpl:lp_0977"/>
<dbReference type="PATRIC" id="fig|220668.9.peg.831"/>
<dbReference type="eggNOG" id="COG0769">
    <property type="taxonomic scope" value="Bacteria"/>
</dbReference>
<dbReference type="HOGENOM" id="CLU_022291_4_1_9"/>
<dbReference type="OrthoDB" id="9800958at2"/>
<dbReference type="PhylomeDB" id="Q88Y23"/>
<dbReference type="UniPathway" id="UPA00219"/>
<dbReference type="Proteomes" id="UP000000432">
    <property type="component" value="Chromosome"/>
</dbReference>
<dbReference type="GO" id="GO:0005737">
    <property type="term" value="C:cytoplasm"/>
    <property type="evidence" value="ECO:0007669"/>
    <property type="project" value="UniProtKB-SubCell"/>
</dbReference>
<dbReference type="GO" id="GO:0005524">
    <property type="term" value="F:ATP binding"/>
    <property type="evidence" value="ECO:0007669"/>
    <property type="project" value="UniProtKB-UniRule"/>
</dbReference>
<dbReference type="GO" id="GO:0000287">
    <property type="term" value="F:magnesium ion binding"/>
    <property type="evidence" value="ECO:0007669"/>
    <property type="project" value="UniProtKB-UniRule"/>
</dbReference>
<dbReference type="GO" id="GO:0008765">
    <property type="term" value="F:UDP-N-acetylmuramoylalanyl-D-glutamate-2,6-diaminopimelate ligase activity"/>
    <property type="evidence" value="ECO:0007669"/>
    <property type="project" value="UniProtKB-UniRule"/>
</dbReference>
<dbReference type="GO" id="GO:0051301">
    <property type="term" value="P:cell division"/>
    <property type="evidence" value="ECO:0007669"/>
    <property type="project" value="UniProtKB-KW"/>
</dbReference>
<dbReference type="GO" id="GO:0071555">
    <property type="term" value="P:cell wall organization"/>
    <property type="evidence" value="ECO:0007669"/>
    <property type="project" value="UniProtKB-KW"/>
</dbReference>
<dbReference type="GO" id="GO:0009252">
    <property type="term" value="P:peptidoglycan biosynthetic process"/>
    <property type="evidence" value="ECO:0007669"/>
    <property type="project" value="UniProtKB-UniRule"/>
</dbReference>
<dbReference type="GO" id="GO:0008360">
    <property type="term" value="P:regulation of cell shape"/>
    <property type="evidence" value="ECO:0007669"/>
    <property type="project" value="UniProtKB-KW"/>
</dbReference>
<dbReference type="Gene3D" id="3.90.190.20">
    <property type="entry name" value="Mur ligase, C-terminal domain"/>
    <property type="match status" value="1"/>
</dbReference>
<dbReference type="Gene3D" id="3.40.1190.10">
    <property type="entry name" value="Mur-like, catalytic domain"/>
    <property type="match status" value="1"/>
</dbReference>
<dbReference type="Gene3D" id="3.40.1390.10">
    <property type="entry name" value="MurE/MurF, N-terminal domain"/>
    <property type="match status" value="1"/>
</dbReference>
<dbReference type="HAMAP" id="MF_00208">
    <property type="entry name" value="MurE"/>
    <property type="match status" value="1"/>
</dbReference>
<dbReference type="InterPro" id="IPR036565">
    <property type="entry name" value="Mur-like_cat_sf"/>
</dbReference>
<dbReference type="InterPro" id="IPR004101">
    <property type="entry name" value="Mur_ligase_C"/>
</dbReference>
<dbReference type="InterPro" id="IPR036615">
    <property type="entry name" value="Mur_ligase_C_dom_sf"/>
</dbReference>
<dbReference type="InterPro" id="IPR013221">
    <property type="entry name" value="Mur_ligase_cen"/>
</dbReference>
<dbReference type="InterPro" id="IPR000713">
    <property type="entry name" value="Mur_ligase_N"/>
</dbReference>
<dbReference type="InterPro" id="IPR035911">
    <property type="entry name" value="MurE/MurF_N"/>
</dbReference>
<dbReference type="InterPro" id="IPR005761">
    <property type="entry name" value="UDP-N-AcMur-Glu-dNH2Pim_ligase"/>
</dbReference>
<dbReference type="NCBIfam" id="TIGR01085">
    <property type="entry name" value="murE"/>
    <property type="match status" value="1"/>
</dbReference>
<dbReference type="NCBIfam" id="NF001124">
    <property type="entry name" value="PRK00139.1-2"/>
    <property type="match status" value="1"/>
</dbReference>
<dbReference type="NCBIfam" id="NF001126">
    <property type="entry name" value="PRK00139.1-4"/>
    <property type="match status" value="1"/>
</dbReference>
<dbReference type="PANTHER" id="PTHR23135">
    <property type="entry name" value="MUR LIGASE FAMILY MEMBER"/>
    <property type="match status" value="1"/>
</dbReference>
<dbReference type="PANTHER" id="PTHR23135:SF4">
    <property type="entry name" value="UDP-N-ACETYLMURAMOYL-L-ALANYL-D-GLUTAMATE--2,6-DIAMINOPIMELATE LIGASE MURE HOMOLOG, CHLOROPLASTIC"/>
    <property type="match status" value="1"/>
</dbReference>
<dbReference type="Pfam" id="PF01225">
    <property type="entry name" value="Mur_ligase"/>
    <property type="match status" value="1"/>
</dbReference>
<dbReference type="Pfam" id="PF02875">
    <property type="entry name" value="Mur_ligase_C"/>
    <property type="match status" value="1"/>
</dbReference>
<dbReference type="Pfam" id="PF08245">
    <property type="entry name" value="Mur_ligase_M"/>
    <property type="match status" value="1"/>
</dbReference>
<dbReference type="SUPFAM" id="SSF53623">
    <property type="entry name" value="MurD-like peptide ligases, catalytic domain"/>
    <property type="match status" value="1"/>
</dbReference>
<dbReference type="SUPFAM" id="SSF53244">
    <property type="entry name" value="MurD-like peptide ligases, peptide-binding domain"/>
    <property type="match status" value="1"/>
</dbReference>
<dbReference type="SUPFAM" id="SSF63418">
    <property type="entry name" value="MurE/MurF N-terminal domain"/>
    <property type="match status" value="1"/>
</dbReference>
<gene>
    <name evidence="1" type="primary">murE</name>
    <name type="ordered locus">lp_0977</name>
</gene>
<comment type="function">
    <text evidence="1">Catalyzes the addition of meso-diaminopimelic acid to the nucleotide precursor UDP-N-acetylmuramoyl-L-alanyl-D-glutamate (UMAG) in the biosynthesis of bacterial cell-wall peptidoglycan.</text>
</comment>
<comment type="catalytic activity">
    <reaction evidence="1">
        <text>UDP-N-acetyl-alpha-D-muramoyl-L-alanyl-D-glutamate + meso-2,6-diaminopimelate + ATP = UDP-N-acetyl-alpha-D-muramoyl-L-alanyl-gamma-D-glutamyl-meso-2,6-diaminopimelate + ADP + phosphate + H(+)</text>
        <dbReference type="Rhea" id="RHEA:23676"/>
        <dbReference type="ChEBI" id="CHEBI:15378"/>
        <dbReference type="ChEBI" id="CHEBI:30616"/>
        <dbReference type="ChEBI" id="CHEBI:43474"/>
        <dbReference type="ChEBI" id="CHEBI:57791"/>
        <dbReference type="ChEBI" id="CHEBI:83900"/>
        <dbReference type="ChEBI" id="CHEBI:83905"/>
        <dbReference type="ChEBI" id="CHEBI:456216"/>
        <dbReference type="EC" id="6.3.2.13"/>
    </reaction>
</comment>
<comment type="cofactor">
    <cofactor evidence="1">
        <name>Mg(2+)</name>
        <dbReference type="ChEBI" id="CHEBI:18420"/>
    </cofactor>
</comment>
<comment type="pathway">
    <text evidence="1">Cell wall biogenesis; peptidoglycan biosynthesis.</text>
</comment>
<comment type="subcellular location">
    <subcellularLocation>
        <location evidence="1">Cytoplasm</location>
    </subcellularLocation>
</comment>
<comment type="PTM">
    <text evidence="1">Carboxylation is probably crucial for Mg(2+) binding and, consequently, for the gamma-phosphate positioning of ATP.</text>
</comment>
<comment type="similarity">
    <text evidence="1">Belongs to the MurCDEF family. MurE subfamily.</text>
</comment>
<sequence length="493" mass="53810">MQASQLINSLKFKQVQPALTTDFDVTMLTQDTREVQPGAMFIAVVGYHVDGHDLVDQAIEKGAKIIVASKPLDVNVPVIYVENTERAMAILADVFYGAPSQKMRMIGVTGTNGKTTVTHLIEQIYRDQQQATGLIGTMYRKIKDEKLPTANTTPDAITTQRTLAAMRDAGVETVAMEVSSIALVLGRVWGIDYDIAVFTNLTQDHLDFHKTMAKYTEAKAMLFAQLGNKYSADGTNKVAVLNTDDPVGREFEQYTAAHVLTFGLKPDAMINAQNVEIKSHGTEFDLSVFGHVTHVTMQLIGQFNVYNMLAAFAAAYASGIPEDQIIKSLEKVTGVKGRFQSVPSHTGVSVIVDYSHTPDGLLNALETIQDFATKDIYCVVGCGGDRDKTKRPKMAKIAVEHSTKPIFTSDNPRTEDPTMILNDMVAGVPNADVPVYEDRHVAIAKAIEAAQPGDVVLIAGKGHEDYQIIGRTKHHFDDSEEAAKALALKPTID</sequence>
<reference key="1">
    <citation type="journal article" date="2003" name="Proc. Natl. Acad. Sci. U.S.A.">
        <title>Complete genome sequence of Lactobacillus plantarum WCFS1.</title>
        <authorList>
            <person name="Kleerebezem M."/>
            <person name="Boekhorst J."/>
            <person name="van Kranenburg R."/>
            <person name="Molenaar D."/>
            <person name="Kuipers O.P."/>
            <person name="Leer R."/>
            <person name="Tarchini R."/>
            <person name="Peters S.A."/>
            <person name="Sandbrink H.M."/>
            <person name="Fiers M.W.E.J."/>
            <person name="Stiekema W."/>
            <person name="Klein Lankhorst R.M."/>
            <person name="Bron P.A."/>
            <person name="Hoffer S.M."/>
            <person name="Nierop Groot M.N."/>
            <person name="Kerkhoven R."/>
            <person name="De Vries M."/>
            <person name="Ursing B."/>
            <person name="De Vos W.M."/>
            <person name="Siezen R.J."/>
        </authorList>
    </citation>
    <scope>NUCLEOTIDE SEQUENCE [LARGE SCALE GENOMIC DNA]</scope>
    <source>
        <strain>ATCC BAA-793 / NCIMB 8826 / WCFS1</strain>
    </source>
</reference>
<reference key="2">
    <citation type="journal article" date="2012" name="J. Bacteriol.">
        <title>Complete resequencing and reannotation of the Lactobacillus plantarum WCFS1 genome.</title>
        <authorList>
            <person name="Siezen R.J."/>
            <person name="Francke C."/>
            <person name="Renckens B."/>
            <person name="Boekhorst J."/>
            <person name="Wels M."/>
            <person name="Kleerebezem M."/>
            <person name="van Hijum S.A."/>
        </authorList>
    </citation>
    <scope>NUCLEOTIDE SEQUENCE [LARGE SCALE GENOMIC DNA]</scope>
    <scope>GENOME REANNOTATION</scope>
    <source>
        <strain>ATCC BAA-793 / NCIMB 8826 / WCFS1</strain>
    </source>
</reference>
<evidence type="ECO:0000255" key="1">
    <source>
        <dbReference type="HAMAP-Rule" id="MF_00208"/>
    </source>
</evidence>
<feature type="chain" id="PRO_0000101905" description="UDP-N-acetylmuramoyl-L-alanyl-D-glutamate--2,6-diaminopimelate ligase">
    <location>
        <begin position="1"/>
        <end position="493"/>
    </location>
</feature>
<feature type="short sequence motif" description="Meso-diaminopimelate recognition motif">
    <location>
        <begin position="410"/>
        <end position="413"/>
    </location>
</feature>
<feature type="binding site" evidence="1">
    <location>
        <position position="32"/>
    </location>
    <ligand>
        <name>UDP-N-acetyl-alpha-D-muramoyl-L-alanyl-D-glutamate</name>
        <dbReference type="ChEBI" id="CHEBI:83900"/>
    </ligand>
</feature>
<feature type="binding site" evidence="1">
    <location>
        <begin position="110"/>
        <end position="116"/>
    </location>
    <ligand>
        <name>ATP</name>
        <dbReference type="ChEBI" id="CHEBI:30616"/>
    </ligand>
</feature>
<feature type="binding site" evidence="1">
    <location>
        <position position="151"/>
    </location>
    <ligand>
        <name>UDP-N-acetyl-alpha-D-muramoyl-L-alanyl-D-glutamate</name>
        <dbReference type="ChEBI" id="CHEBI:83900"/>
    </ligand>
</feature>
<feature type="binding site" evidence="1">
    <location>
        <begin position="152"/>
        <end position="153"/>
    </location>
    <ligand>
        <name>UDP-N-acetyl-alpha-D-muramoyl-L-alanyl-D-glutamate</name>
        <dbReference type="ChEBI" id="CHEBI:83900"/>
    </ligand>
</feature>
<feature type="binding site" evidence="1">
    <location>
        <position position="179"/>
    </location>
    <ligand>
        <name>UDP-N-acetyl-alpha-D-muramoyl-L-alanyl-D-glutamate</name>
        <dbReference type="ChEBI" id="CHEBI:83900"/>
    </ligand>
</feature>
<feature type="binding site" evidence="1">
    <location>
        <position position="187"/>
    </location>
    <ligand>
        <name>UDP-N-acetyl-alpha-D-muramoyl-L-alanyl-D-glutamate</name>
        <dbReference type="ChEBI" id="CHEBI:83900"/>
    </ligand>
</feature>
<feature type="binding site" evidence="1">
    <location>
        <position position="386"/>
    </location>
    <ligand>
        <name>meso-2,6-diaminopimelate</name>
        <dbReference type="ChEBI" id="CHEBI:57791"/>
    </ligand>
</feature>
<feature type="binding site" evidence="1">
    <location>
        <begin position="410"/>
        <end position="413"/>
    </location>
    <ligand>
        <name>meso-2,6-diaminopimelate</name>
        <dbReference type="ChEBI" id="CHEBI:57791"/>
    </ligand>
</feature>
<feature type="binding site" evidence="1">
    <location>
        <position position="460"/>
    </location>
    <ligand>
        <name>meso-2,6-diaminopimelate</name>
        <dbReference type="ChEBI" id="CHEBI:57791"/>
    </ligand>
</feature>
<feature type="binding site" evidence="1">
    <location>
        <position position="464"/>
    </location>
    <ligand>
        <name>meso-2,6-diaminopimelate</name>
        <dbReference type="ChEBI" id="CHEBI:57791"/>
    </ligand>
</feature>
<feature type="modified residue" description="N6-carboxylysine" evidence="1">
    <location>
        <position position="219"/>
    </location>
</feature>
<protein>
    <recommendedName>
        <fullName evidence="1">UDP-N-acetylmuramoyl-L-alanyl-D-glutamate--2,6-diaminopimelate ligase</fullName>
        <ecNumber evidence="1">6.3.2.13</ecNumber>
    </recommendedName>
    <alternativeName>
        <fullName evidence="1">Meso-A2pm-adding enzyme</fullName>
    </alternativeName>
    <alternativeName>
        <fullName evidence="1">Meso-diaminopimelate-adding enzyme</fullName>
    </alternativeName>
    <alternativeName>
        <fullName evidence="1">UDP-MurNAc-L-Ala-D-Glu:meso-diaminopimelate ligase</fullName>
    </alternativeName>
    <alternativeName>
        <fullName evidence="1">UDP-MurNAc-tripeptide synthetase</fullName>
    </alternativeName>
    <alternativeName>
        <fullName evidence="1">UDP-N-acetylmuramyl-tripeptide synthetase</fullName>
    </alternativeName>
</protein>
<keyword id="KW-0067">ATP-binding</keyword>
<keyword id="KW-0131">Cell cycle</keyword>
<keyword id="KW-0132">Cell division</keyword>
<keyword id="KW-0133">Cell shape</keyword>
<keyword id="KW-0961">Cell wall biogenesis/degradation</keyword>
<keyword id="KW-0963">Cytoplasm</keyword>
<keyword id="KW-0436">Ligase</keyword>
<keyword id="KW-0460">Magnesium</keyword>
<keyword id="KW-0547">Nucleotide-binding</keyword>
<keyword id="KW-0573">Peptidoglycan synthesis</keyword>
<keyword id="KW-1185">Reference proteome</keyword>
<name>MURE_LACPL</name>
<proteinExistence type="inferred from homology"/>
<organism>
    <name type="scientific">Lactiplantibacillus plantarum (strain ATCC BAA-793 / NCIMB 8826 / WCFS1)</name>
    <name type="common">Lactobacillus plantarum</name>
    <dbReference type="NCBI Taxonomy" id="220668"/>
    <lineage>
        <taxon>Bacteria</taxon>
        <taxon>Bacillati</taxon>
        <taxon>Bacillota</taxon>
        <taxon>Bacilli</taxon>
        <taxon>Lactobacillales</taxon>
        <taxon>Lactobacillaceae</taxon>
        <taxon>Lactiplantibacillus</taxon>
    </lineage>
</organism>